<comment type="function">
    <text evidence="1">Catalyzes the epimerization of the S- and R-forms of NAD(P)HX, a damaged form of NAD(P)H that is a result of enzymatic or heat-dependent hydration. This is a prerequisite for the S-specific NAD(P)H-hydrate dehydratase to allow the repair of both epimers of NAD(P)HX.</text>
</comment>
<comment type="catalytic activity">
    <reaction evidence="1">
        <text>(6R)-NADHX = (6S)-NADHX</text>
        <dbReference type="Rhea" id="RHEA:32215"/>
        <dbReference type="ChEBI" id="CHEBI:64074"/>
        <dbReference type="ChEBI" id="CHEBI:64075"/>
        <dbReference type="EC" id="5.1.99.6"/>
    </reaction>
</comment>
<comment type="catalytic activity">
    <reaction evidence="1">
        <text>(6R)-NADPHX = (6S)-NADPHX</text>
        <dbReference type="Rhea" id="RHEA:32227"/>
        <dbReference type="ChEBI" id="CHEBI:64076"/>
        <dbReference type="ChEBI" id="CHEBI:64077"/>
        <dbReference type="EC" id="5.1.99.6"/>
    </reaction>
</comment>
<comment type="cofactor">
    <cofactor evidence="1">
        <name>K(+)</name>
        <dbReference type="ChEBI" id="CHEBI:29103"/>
    </cofactor>
    <text evidence="1">Binds 1 potassium ion per subunit.</text>
</comment>
<comment type="similarity">
    <text evidence="1">Belongs to the NnrE/AIBP family.</text>
</comment>
<gene>
    <name evidence="1" type="primary">nnrE</name>
    <name type="ordered locus">LEGAS_1774</name>
</gene>
<proteinExistence type="inferred from homology"/>
<organism>
    <name type="scientific">Leuconostoc gelidum subsp. gasicomitatum (strain DSM 15947 / CCUG 46042 / CECT 5767 / JCM 12535 / LMG 18811 / NBRC 113245 / TB1-10)</name>
    <name type="common">Leuconostoc gasicomitatum</name>
    <dbReference type="NCBI Taxonomy" id="762550"/>
    <lineage>
        <taxon>Bacteria</taxon>
        <taxon>Bacillati</taxon>
        <taxon>Bacillota</taxon>
        <taxon>Bacilli</taxon>
        <taxon>Lactobacillales</taxon>
        <taxon>Lactobacillaceae</taxon>
        <taxon>Leuconostoc</taxon>
        <taxon>Leuconostoc gelidum group</taxon>
    </lineage>
</organism>
<feature type="chain" id="PRO_0000416366" description="NAD(P)H-hydrate epimerase">
    <location>
        <begin position="1"/>
        <end position="223"/>
    </location>
</feature>
<feature type="domain" description="YjeF N-terminal" evidence="1">
    <location>
        <begin position="9"/>
        <end position="209"/>
    </location>
</feature>
<feature type="binding site" evidence="1">
    <location>
        <begin position="57"/>
        <end position="61"/>
    </location>
    <ligand>
        <name>(6S)-NADPHX</name>
        <dbReference type="ChEBI" id="CHEBI:64076"/>
    </ligand>
</feature>
<feature type="binding site" evidence="1">
    <location>
        <position position="58"/>
    </location>
    <ligand>
        <name>K(+)</name>
        <dbReference type="ChEBI" id="CHEBI:29103"/>
    </ligand>
</feature>
<feature type="binding site" evidence="1">
    <location>
        <position position="119"/>
    </location>
    <ligand>
        <name>K(+)</name>
        <dbReference type="ChEBI" id="CHEBI:29103"/>
    </ligand>
</feature>
<feature type="binding site" evidence="1">
    <location>
        <begin position="123"/>
        <end position="129"/>
    </location>
    <ligand>
        <name>(6S)-NADPHX</name>
        <dbReference type="ChEBI" id="CHEBI:64076"/>
    </ligand>
</feature>
<feature type="binding site" evidence="1">
    <location>
        <position position="152"/>
    </location>
    <ligand>
        <name>(6S)-NADPHX</name>
        <dbReference type="ChEBI" id="CHEBI:64076"/>
    </ligand>
</feature>
<feature type="binding site" evidence="1">
    <location>
        <position position="155"/>
    </location>
    <ligand>
        <name>K(+)</name>
        <dbReference type="ChEBI" id="CHEBI:29103"/>
    </ligand>
</feature>
<accession>D8MHV4</accession>
<sequence length="223" mass="23926">MQLVTASEMQKIDTYTVNTIGMPQDVLIERAALSVIDVIGAGHFNLEHILVLAGLGNNGADGVAITRLLYAQGFNVSLQFVGNVSRAKESVQRQLAIIEKYGLVRSEKSDFNEATLIIDAIFGTGLNNLLPEGLQKMIKAANHIEKTVIAIDTPTGIDATTGEVRGAALKAHTTVTFGYNKIGLTRRVGGYLSGNVIVKDIGLLTPPDFSFSDTEENHSTKDV</sequence>
<evidence type="ECO:0000255" key="1">
    <source>
        <dbReference type="HAMAP-Rule" id="MF_01966"/>
    </source>
</evidence>
<dbReference type="EC" id="5.1.99.6" evidence="1"/>
<dbReference type="EMBL" id="FN822744">
    <property type="protein sequence ID" value="CBL92422.1"/>
    <property type="molecule type" value="Genomic_DNA"/>
</dbReference>
<dbReference type="RefSeq" id="WP_010385385.1">
    <property type="nucleotide sequence ID" value="NC_014319.1"/>
</dbReference>
<dbReference type="SMR" id="D8MHV4"/>
<dbReference type="GeneID" id="34300556"/>
<dbReference type="KEGG" id="lgs:LEGAS_1774"/>
<dbReference type="HOGENOM" id="CLU_024853_0_1_9"/>
<dbReference type="GO" id="GO:0000932">
    <property type="term" value="C:P-body"/>
    <property type="evidence" value="ECO:0007669"/>
    <property type="project" value="TreeGrafter"/>
</dbReference>
<dbReference type="GO" id="GO:0046872">
    <property type="term" value="F:metal ion binding"/>
    <property type="evidence" value="ECO:0007669"/>
    <property type="project" value="UniProtKB-KW"/>
</dbReference>
<dbReference type="GO" id="GO:0003729">
    <property type="term" value="F:mRNA binding"/>
    <property type="evidence" value="ECO:0007669"/>
    <property type="project" value="TreeGrafter"/>
</dbReference>
<dbReference type="GO" id="GO:0052856">
    <property type="term" value="F:NAD(P)HX epimerase activity"/>
    <property type="evidence" value="ECO:0007669"/>
    <property type="project" value="UniProtKB-UniRule"/>
</dbReference>
<dbReference type="GO" id="GO:0000166">
    <property type="term" value="F:nucleotide binding"/>
    <property type="evidence" value="ECO:0007669"/>
    <property type="project" value="UniProtKB-KW"/>
</dbReference>
<dbReference type="GO" id="GO:0031087">
    <property type="term" value="P:deadenylation-independent decapping of nuclear-transcribed mRNA"/>
    <property type="evidence" value="ECO:0007669"/>
    <property type="project" value="TreeGrafter"/>
</dbReference>
<dbReference type="GO" id="GO:0033962">
    <property type="term" value="P:P-body assembly"/>
    <property type="evidence" value="ECO:0007669"/>
    <property type="project" value="TreeGrafter"/>
</dbReference>
<dbReference type="Gene3D" id="3.40.50.10260">
    <property type="entry name" value="YjeF N-terminal domain"/>
    <property type="match status" value="1"/>
</dbReference>
<dbReference type="HAMAP" id="MF_01966">
    <property type="entry name" value="NADHX_epimerase"/>
    <property type="match status" value="1"/>
</dbReference>
<dbReference type="InterPro" id="IPR004443">
    <property type="entry name" value="YjeF_N_dom"/>
</dbReference>
<dbReference type="InterPro" id="IPR036652">
    <property type="entry name" value="YjeF_N_dom_sf"/>
</dbReference>
<dbReference type="NCBIfam" id="TIGR00197">
    <property type="entry name" value="yjeF_nterm"/>
    <property type="match status" value="1"/>
</dbReference>
<dbReference type="PANTHER" id="PTHR13612">
    <property type="entry name" value="ENHANCER OF MRNA-DECAPPING PROTEIN 3"/>
    <property type="match status" value="1"/>
</dbReference>
<dbReference type="PANTHER" id="PTHR13612:SF0">
    <property type="entry name" value="ENHANCER OF MRNA-DECAPPING PROTEIN 3"/>
    <property type="match status" value="1"/>
</dbReference>
<dbReference type="Pfam" id="PF03853">
    <property type="entry name" value="YjeF_N"/>
    <property type="match status" value="1"/>
</dbReference>
<dbReference type="SUPFAM" id="SSF64153">
    <property type="entry name" value="YjeF N-terminal domain-like"/>
    <property type="match status" value="1"/>
</dbReference>
<dbReference type="PROSITE" id="PS51385">
    <property type="entry name" value="YJEF_N"/>
    <property type="match status" value="1"/>
</dbReference>
<keyword id="KW-0413">Isomerase</keyword>
<keyword id="KW-0479">Metal-binding</keyword>
<keyword id="KW-0520">NAD</keyword>
<keyword id="KW-0521">NADP</keyword>
<keyword id="KW-0547">Nucleotide-binding</keyword>
<keyword id="KW-0630">Potassium</keyword>
<reference key="1">
    <citation type="submission" date="2010-04" db="EMBL/GenBank/DDBJ databases">
        <title>Genome sequence and comparative genomics of a food spoilage lactic acid bacterium Leuconostoc gasicomitatum 18811T.</title>
        <authorList>
            <person name="Johansson P."/>
            <person name="Paulin L."/>
            <person name="Vihavainen E.J."/>
            <person name="Salovuori N."/>
            <person name="Alatalo E.R."/>
            <person name="Bjoerkroth J.K."/>
            <person name="Auvinen P."/>
        </authorList>
    </citation>
    <scope>NUCLEOTIDE SEQUENCE [LARGE SCALE GENOMIC DNA]</scope>
    <source>
        <strain>DSM 15947 / CCUG 46042 / CECT 5767 / JCM 12535 / LMG 18811 / NBRC 113245 / TB1-10</strain>
    </source>
</reference>
<name>NNRE_LEUGG</name>
<protein>
    <recommendedName>
        <fullName evidence="1">NAD(P)H-hydrate epimerase</fullName>
        <ecNumber evidence="1">5.1.99.6</ecNumber>
    </recommendedName>
    <alternativeName>
        <fullName evidence="1">NAD(P)HX epimerase</fullName>
    </alternativeName>
</protein>